<sequence length="173" mass="19335">MTWRERAELRIGISGMPGVGKTTLVLKIAELARSRVKVCGFVTVEVREGGTRIGFDVVDLANGRRMALARVGRGEPSVGKYVVNLEACNVISEALRRECDLKIIDEIGAMEFKCKNFGEDLQTALHTSPRVIATVHRNYIDIAKKLGLEIIWLTRENWGLVFRQLLIQLGLTQ</sequence>
<name>NTPTH_PYRAE</name>
<keyword id="KW-0067">ATP-binding</keyword>
<keyword id="KW-0378">Hydrolase</keyword>
<keyword id="KW-0547">Nucleotide-binding</keyword>
<keyword id="KW-1185">Reference proteome</keyword>
<accession>Q8ZTE6</accession>
<proteinExistence type="inferred from homology"/>
<organism>
    <name type="scientific">Pyrobaculum aerophilum (strain ATCC 51768 / DSM 7523 / JCM 9630 / CIP 104966 / NBRC 100827 / IM2)</name>
    <dbReference type="NCBI Taxonomy" id="178306"/>
    <lineage>
        <taxon>Archaea</taxon>
        <taxon>Thermoproteota</taxon>
        <taxon>Thermoprotei</taxon>
        <taxon>Thermoproteales</taxon>
        <taxon>Thermoproteaceae</taxon>
        <taxon>Pyrobaculum</taxon>
    </lineage>
</organism>
<feature type="chain" id="PRO_0000146701" description="Nucleoside-triphosphatase THEP1">
    <location>
        <begin position="1"/>
        <end position="173"/>
    </location>
</feature>
<feature type="binding site" evidence="1">
    <location>
        <begin position="15"/>
        <end position="22"/>
    </location>
    <ligand>
        <name>ATP</name>
        <dbReference type="ChEBI" id="CHEBI:30616"/>
    </ligand>
</feature>
<feature type="binding site" evidence="1">
    <location>
        <begin position="101"/>
        <end position="108"/>
    </location>
    <ligand>
        <name>ATP</name>
        <dbReference type="ChEBI" id="CHEBI:30616"/>
    </ligand>
</feature>
<dbReference type="EC" id="3.6.1.15" evidence="1"/>
<dbReference type="EMBL" id="AE009441">
    <property type="protein sequence ID" value="AAL64816.1"/>
    <property type="molecule type" value="Genomic_DNA"/>
</dbReference>
<dbReference type="RefSeq" id="WP_011009283.1">
    <property type="nucleotide sequence ID" value="NC_003364.1"/>
</dbReference>
<dbReference type="SMR" id="Q8ZTE6"/>
<dbReference type="FunCoup" id="Q8ZTE6">
    <property type="interactions" value="110"/>
</dbReference>
<dbReference type="STRING" id="178306.PAE3292"/>
<dbReference type="EnsemblBacteria" id="AAL64816">
    <property type="protein sequence ID" value="AAL64816"/>
    <property type="gene ID" value="PAE3292"/>
</dbReference>
<dbReference type="GeneID" id="1464004"/>
<dbReference type="KEGG" id="pai:PAE3292"/>
<dbReference type="PATRIC" id="fig|178306.9.peg.2478"/>
<dbReference type="eggNOG" id="arCOG01034">
    <property type="taxonomic scope" value="Archaea"/>
</dbReference>
<dbReference type="HOGENOM" id="CLU_103145_1_1_2"/>
<dbReference type="InParanoid" id="Q8ZTE6"/>
<dbReference type="Proteomes" id="UP000002439">
    <property type="component" value="Chromosome"/>
</dbReference>
<dbReference type="GO" id="GO:0005524">
    <property type="term" value="F:ATP binding"/>
    <property type="evidence" value="ECO:0007669"/>
    <property type="project" value="UniProtKB-UniRule"/>
</dbReference>
<dbReference type="GO" id="GO:0016887">
    <property type="term" value="F:ATP hydrolysis activity"/>
    <property type="evidence" value="ECO:0007669"/>
    <property type="project" value="InterPro"/>
</dbReference>
<dbReference type="CDD" id="cd19482">
    <property type="entry name" value="RecA-like_Thep1"/>
    <property type="match status" value="1"/>
</dbReference>
<dbReference type="Gene3D" id="3.40.50.300">
    <property type="entry name" value="P-loop containing nucleotide triphosphate hydrolases"/>
    <property type="match status" value="1"/>
</dbReference>
<dbReference type="HAMAP" id="MF_00796">
    <property type="entry name" value="NTPase_1"/>
    <property type="match status" value="1"/>
</dbReference>
<dbReference type="InterPro" id="IPR003593">
    <property type="entry name" value="AAA+_ATPase"/>
</dbReference>
<dbReference type="InterPro" id="IPR004948">
    <property type="entry name" value="Nuc-triphosphatase_THEP1"/>
</dbReference>
<dbReference type="InterPro" id="IPR027417">
    <property type="entry name" value="P-loop_NTPase"/>
</dbReference>
<dbReference type="NCBIfam" id="NF010248">
    <property type="entry name" value="PRK13695.1"/>
    <property type="match status" value="1"/>
</dbReference>
<dbReference type="PANTHER" id="PTHR43146">
    <property type="entry name" value="CANCER-RELATED NUCLEOSIDE-TRIPHOSPHATASE"/>
    <property type="match status" value="1"/>
</dbReference>
<dbReference type="PANTHER" id="PTHR43146:SF1">
    <property type="entry name" value="CANCER-RELATED NUCLEOSIDE-TRIPHOSPHATASE"/>
    <property type="match status" value="1"/>
</dbReference>
<dbReference type="Pfam" id="PF03266">
    <property type="entry name" value="NTPase_1"/>
    <property type="match status" value="1"/>
</dbReference>
<dbReference type="PRINTS" id="PR00364">
    <property type="entry name" value="DISEASERSIST"/>
</dbReference>
<dbReference type="SMART" id="SM00382">
    <property type="entry name" value="AAA"/>
    <property type="match status" value="1"/>
</dbReference>
<dbReference type="SUPFAM" id="SSF52540">
    <property type="entry name" value="P-loop containing nucleoside triphosphate hydrolases"/>
    <property type="match status" value="1"/>
</dbReference>
<protein>
    <recommendedName>
        <fullName evidence="1">Nucleoside-triphosphatase THEP1</fullName>
        <shortName evidence="1">NTPase THEP1</shortName>
        <ecNumber evidence="1">3.6.1.15</ecNumber>
    </recommendedName>
    <alternativeName>
        <fullName evidence="1">Nucleoside triphosphate phosphohydrolase</fullName>
    </alternativeName>
</protein>
<gene>
    <name type="ordered locus">PAE3292</name>
</gene>
<evidence type="ECO:0000255" key="1">
    <source>
        <dbReference type="HAMAP-Rule" id="MF_00796"/>
    </source>
</evidence>
<comment type="function">
    <text evidence="1">Has nucleotide phosphatase activity towards ATP, GTP, CTP, TTP and UTP. May hydrolyze nucleoside diphosphates with lower efficiency.</text>
</comment>
<comment type="catalytic activity">
    <reaction evidence="1">
        <text>a ribonucleoside 5'-triphosphate + H2O = a ribonucleoside 5'-diphosphate + phosphate + H(+)</text>
        <dbReference type="Rhea" id="RHEA:23680"/>
        <dbReference type="ChEBI" id="CHEBI:15377"/>
        <dbReference type="ChEBI" id="CHEBI:15378"/>
        <dbReference type="ChEBI" id="CHEBI:43474"/>
        <dbReference type="ChEBI" id="CHEBI:57930"/>
        <dbReference type="ChEBI" id="CHEBI:61557"/>
        <dbReference type="EC" id="3.6.1.15"/>
    </reaction>
</comment>
<comment type="similarity">
    <text evidence="1">Belongs to the THEP1 NTPase family.</text>
</comment>
<reference key="1">
    <citation type="journal article" date="2002" name="Proc. Natl. Acad. Sci. U.S.A.">
        <title>Genome sequence of the hyperthermophilic crenarchaeon Pyrobaculum aerophilum.</title>
        <authorList>
            <person name="Fitz-Gibbon S.T."/>
            <person name="Ladner H."/>
            <person name="Kim U.-J."/>
            <person name="Stetter K.O."/>
            <person name="Simon M.I."/>
            <person name="Miller J.H."/>
        </authorList>
    </citation>
    <scope>NUCLEOTIDE SEQUENCE [LARGE SCALE GENOMIC DNA]</scope>
    <source>
        <strain>ATCC 51768 / DSM 7523 / JCM 9630 / CIP 104966 / NBRC 100827 / IM2</strain>
    </source>
</reference>